<name>IF3_CORGL</name>
<protein>
    <recommendedName>
        <fullName evidence="1">Translation initiation factor IF-3</fullName>
    </recommendedName>
</protein>
<evidence type="ECO:0000255" key="1">
    <source>
        <dbReference type="HAMAP-Rule" id="MF_00080"/>
    </source>
</evidence>
<proteinExistence type="inferred from homology"/>
<keyword id="KW-0963">Cytoplasm</keyword>
<keyword id="KW-0396">Initiation factor</keyword>
<keyword id="KW-0648">Protein biosynthesis</keyword>
<keyword id="KW-1185">Reference proteome</keyword>
<feature type="chain" id="PRO_0000177512" description="Translation initiation factor IF-3">
    <location>
        <begin position="1"/>
        <end position="189"/>
    </location>
</feature>
<sequence>MVRYVKFSRTANRGVHISAEARINERIRVPEVRLVGPNGEQVGIVRIEDARKLAFDADLDLVEVAPNAKPPVCKIMDYGKFKYEAAQKARESRKNQQQTVVKEQKLRPKIDDHDYETKKNNVIRFLEKGSKVKVTIMFRGREQARPELGYRLLERLANDVVDFGIVETRAKQDGRNMTMVLGPVRKGKK</sequence>
<reference key="1">
    <citation type="journal article" date="2003" name="Appl. Microbiol. Biotechnol.">
        <title>The Corynebacterium glutamicum genome: features and impacts on biotechnological processes.</title>
        <authorList>
            <person name="Ikeda M."/>
            <person name="Nakagawa S."/>
        </authorList>
    </citation>
    <scope>NUCLEOTIDE SEQUENCE [LARGE SCALE GENOMIC DNA]</scope>
    <source>
        <strain>ATCC 13032 / DSM 20300 / JCM 1318 / BCRC 11384 / CCUG 27702 / LMG 3730 / NBRC 12168 / NCIMB 10025 / NRRL B-2784 / 534</strain>
    </source>
</reference>
<reference key="2">
    <citation type="journal article" date="2003" name="J. Biotechnol.">
        <title>The complete Corynebacterium glutamicum ATCC 13032 genome sequence and its impact on the production of L-aspartate-derived amino acids and vitamins.</title>
        <authorList>
            <person name="Kalinowski J."/>
            <person name="Bathe B."/>
            <person name="Bartels D."/>
            <person name="Bischoff N."/>
            <person name="Bott M."/>
            <person name="Burkovski A."/>
            <person name="Dusch N."/>
            <person name="Eggeling L."/>
            <person name="Eikmanns B.J."/>
            <person name="Gaigalat L."/>
            <person name="Goesmann A."/>
            <person name="Hartmann M."/>
            <person name="Huthmacher K."/>
            <person name="Kraemer R."/>
            <person name="Linke B."/>
            <person name="McHardy A.C."/>
            <person name="Meyer F."/>
            <person name="Moeckel B."/>
            <person name="Pfefferle W."/>
            <person name="Puehler A."/>
            <person name="Rey D.A."/>
            <person name="Rueckert C."/>
            <person name="Rupp O."/>
            <person name="Sahm H."/>
            <person name="Wendisch V.F."/>
            <person name="Wiegraebe I."/>
            <person name="Tauch A."/>
        </authorList>
    </citation>
    <scope>NUCLEOTIDE SEQUENCE [LARGE SCALE GENOMIC DNA]</scope>
    <source>
        <strain>ATCC 13032 / DSM 20300 / JCM 1318 / BCRC 11384 / CCUG 27702 / LMG 3730 / NBRC 12168 / NCIMB 10025 / NRRL B-2784 / 534</strain>
    </source>
</reference>
<gene>
    <name evidence="1" type="primary">infC</name>
    <name type="ordered locus">Cgl1378</name>
    <name type="ordered locus">cg1563</name>
</gene>
<accession>Q8NQP8</accession>
<organism>
    <name type="scientific">Corynebacterium glutamicum (strain ATCC 13032 / DSM 20300 / JCM 1318 / BCRC 11384 / CCUG 27702 / LMG 3730 / NBRC 12168 / NCIMB 10025 / NRRL B-2784 / 534)</name>
    <dbReference type="NCBI Taxonomy" id="196627"/>
    <lineage>
        <taxon>Bacteria</taxon>
        <taxon>Bacillati</taxon>
        <taxon>Actinomycetota</taxon>
        <taxon>Actinomycetes</taxon>
        <taxon>Mycobacteriales</taxon>
        <taxon>Corynebacteriaceae</taxon>
        <taxon>Corynebacterium</taxon>
    </lineage>
</organism>
<comment type="function">
    <text evidence="1">IF-3 binds to the 30S ribosomal subunit and shifts the equilibrium between 70S ribosomes and their 50S and 30S subunits in favor of the free subunits, thus enhancing the availability of 30S subunits on which protein synthesis initiation begins.</text>
</comment>
<comment type="subunit">
    <text evidence="1">Monomer.</text>
</comment>
<comment type="subcellular location">
    <subcellularLocation>
        <location evidence="1">Cytoplasm</location>
    </subcellularLocation>
</comment>
<comment type="similarity">
    <text evidence="1">Belongs to the IF-3 family.</text>
</comment>
<dbReference type="EMBL" id="BA000036">
    <property type="protein sequence ID" value="BAB98771.1"/>
    <property type="molecule type" value="Genomic_DNA"/>
</dbReference>
<dbReference type="EMBL" id="BX927152">
    <property type="protein sequence ID" value="CAF21389.1"/>
    <property type="molecule type" value="Genomic_DNA"/>
</dbReference>
<dbReference type="RefSeq" id="NP_600597.1">
    <property type="nucleotide sequence ID" value="NC_003450.3"/>
</dbReference>
<dbReference type="RefSeq" id="WP_011014321.1">
    <property type="nucleotide sequence ID" value="NC_006958.1"/>
</dbReference>
<dbReference type="SMR" id="Q8NQP8"/>
<dbReference type="STRING" id="196627.cg1563"/>
<dbReference type="GeneID" id="1019354"/>
<dbReference type="KEGG" id="cgb:cg1563"/>
<dbReference type="KEGG" id="cgl:Cgl1378"/>
<dbReference type="PATRIC" id="fig|196627.13.peg.1346"/>
<dbReference type="eggNOG" id="COG0290">
    <property type="taxonomic scope" value="Bacteria"/>
</dbReference>
<dbReference type="HOGENOM" id="CLU_054919_3_2_11"/>
<dbReference type="OrthoDB" id="9806014at2"/>
<dbReference type="BioCyc" id="CORYNE:G18NG-10957-MONOMER"/>
<dbReference type="Proteomes" id="UP000000582">
    <property type="component" value="Chromosome"/>
</dbReference>
<dbReference type="Proteomes" id="UP000001009">
    <property type="component" value="Chromosome"/>
</dbReference>
<dbReference type="GO" id="GO:0005829">
    <property type="term" value="C:cytosol"/>
    <property type="evidence" value="ECO:0007669"/>
    <property type="project" value="TreeGrafter"/>
</dbReference>
<dbReference type="GO" id="GO:0016020">
    <property type="term" value="C:membrane"/>
    <property type="evidence" value="ECO:0007669"/>
    <property type="project" value="TreeGrafter"/>
</dbReference>
<dbReference type="GO" id="GO:0043022">
    <property type="term" value="F:ribosome binding"/>
    <property type="evidence" value="ECO:0007669"/>
    <property type="project" value="TreeGrafter"/>
</dbReference>
<dbReference type="GO" id="GO:0003743">
    <property type="term" value="F:translation initiation factor activity"/>
    <property type="evidence" value="ECO:0007669"/>
    <property type="project" value="UniProtKB-UniRule"/>
</dbReference>
<dbReference type="GO" id="GO:0032790">
    <property type="term" value="P:ribosome disassembly"/>
    <property type="evidence" value="ECO:0007669"/>
    <property type="project" value="TreeGrafter"/>
</dbReference>
<dbReference type="FunFam" id="3.10.20.80:FF:000001">
    <property type="entry name" value="Translation initiation factor IF-3"/>
    <property type="match status" value="1"/>
</dbReference>
<dbReference type="FunFam" id="3.30.110.10:FF:000002">
    <property type="entry name" value="Translation initiation factor IF-3"/>
    <property type="match status" value="1"/>
</dbReference>
<dbReference type="Gene3D" id="3.30.110.10">
    <property type="entry name" value="Translation initiation factor 3 (IF-3), C-terminal domain"/>
    <property type="match status" value="1"/>
</dbReference>
<dbReference type="Gene3D" id="3.10.20.80">
    <property type="entry name" value="Translation initiation factor 3 (IF-3), N-terminal domain"/>
    <property type="match status" value="1"/>
</dbReference>
<dbReference type="HAMAP" id="MF_00080">
    <property type="entry name" value="IF_3"/>
    <property type="match status" value="1"/>
</dbReference>
<dbReference type="InterPro" id="IPR036788">
    <property type="entry name" value="T_IF-3_C_sf"/>
</dbReference>
<dbReference type="InterPro" id="IPR036787">
    <property type="entry name" value="T_IF-3_N_sf"/>
</dbReference>
<dbReference type="InterPro" id="IPR019813">
    <property type="entry name" value="Translation_initiation_fac3_CS"/>
</dbReference>
<dbReference type="InterPro" id="IPR001288">
    <property type="entry name" value="Translation_initiation_fac_3"/>
</dbReference>
<dbReference type="InterPro" id="IPR019815">
    <property type="entry name" value="Translation_initiation_fac_3_C"/>
</dbReference>
<dbReference type="InterPro" id="IPR019814">
    <property type="entry name" value="Translation_initiation_fac_3_N"/>
</dbReference>
<dbReference type="NCBIfam" id="TIGR00168">
    <property type="entry name" value="infC"/>
    <property type="match status" value="1"/>
</dbReference>
<dbReference type="PANTHER" id="PTHR10938">
    <property type="entry name" value="TRANSLATION INITIATION FACTOR IF-3"/>
    <property type="match status" value="1"/>
</dbReference>
<dbReference type="PANTHER" id="PTHR10938:SF0">
    <property type="entry name" value="TRANSLATION INITIATION FACTOR IF-3, MITOCHONDRIAL"/>
    <property type="match status" value="1"/>
</dbReference>
<dbReference type="Pfam" id="PF00707">
    <property type="entry name" value="IF3_C"/>
    <property type="match status" value="1"/>
</dbReference>
<dbReference type="Pfam" id="PF05198">
    <property type="entry name" value="IF3_N"/>
    <property type="match status" value="1"/>
</dbReference>
<dbReference type="SUPFAM" id="SSF55200">
    <property type="entry name" value="Translation initiation factor IF3, C-terminal domain"/>
    <property type="match status" value="1"/>
</dbReference>
<dbReference type="SUPFAM" id="SSF54364">
    <property type="entry name" value="Translation initiation factor IF3, N-terminal domain"/>
    <property type="match status" value="1"/>
</dbReference>
<dbReference type="PROSITE" id="PS00938">
    <property type="entry name" value="IF3"/>
    <property type="match status" value="1"/>
</dbReference>